<gene>
    <name evidence="4" type="primary">bauC</name>
    <name type="ordered locus">PA0130</name>
</gene>
<reference key="1">
    <citation type="journal article" date="2000" name="Nature">
        <title>Complete genome sequence of Pseudomonas aeruginosa PAO1, an opportunistic pathogen.</title>
        <authorList>
            <person name="Stover C.K."/>
            <person name="Pham X.-Q.T."/>
            <person name="Erwin A.L."/>
            <person name="Mizoguchi S.D."/>
            <person name="Warrener P."/>
            <person name="Hickey M.J."/>
            <person name="Brinkman F.S.L."/>
            <person name="Hufnagle W.O."/>
            <person name="Kowalik D.J."/>
            <person name="Lagrou M."/>
            <person name="Garber R.L."/>
            <person name="Goltry L."/>
            <person name="Tolentino E."/>
            <person name="Westbrock-Wadman S."/>
            <person name="Yuan Y."/>
            <person name="Brody L.L."/>
            <person name="Coulter S.N."/>
            <person name="Folger K.R."/>
            <person name="Kas A."/>
            <person name="Larbig K."/>
            <person name="Lim R.M."/>
            <person name="Smith K.A."/>
            <person name="Spencer D.H."/>
            <person name="Wong G.K.-S."/>
            <person name="Wu Z."/>
            <person name="Paulsen I.T."/>
            <person name="Reizer J."/>
            <person name="Saier M.H. Jr."/>
            <person name="Hancock R.E.W."/>
            <person name="Lory S."/>
            <person name="Olson M.V."/>
        </authorList>
    </citation>
    <scope>NUCLEOTIDE SEQUENCE [LARGE SCALE GENOMIC DNA]</scope>
    <source>
        <strain>ATCC 15692 / DSM 22644 / CIP 104116 / JCM 14847 / LMG 12228 / 1C / PRS 101 / PAO1</strain>
    </source>
</reference>
<reference key="2">
    <citation type="journal article" date="2011" name="J. Bacteriol.">
        <title>Functional characterization of seven gamma-glutamylpolyamine synthetase genes and the bauRABCD locus for polyamine and beta-alanine utilization in Pseudomonas aeruginosa PAO1.</title>
        <authorList>
            <person name="Yao X."/>
            <person name="He W."/>
            <person name="Lu C.D."/>
        </authorList>
    </citation>
    <scope>FUNCTION</scope>
    <scope>INDUCTION</scope>
    <scope>DISRUPTION PHENOTYPE</scope>
</reference>
<comment type="function">
    <text evidence="3">Involved in the degradation of beta-alanine. Likely catalyzes the NAD(+)- and CoA-dependent oxidative decarboxylation of malonate semialdehyde (3-oxopropanoate) to acetyl-CoA.</text>
</comment>
<comment type="catalytic activity">
    <reaction evidence="6">
        <text>3-oxopropanoate + NAD(+) + CoA + H2O = hydrogencarbonate + acetyl-CoA + NADH + H(+)</text>
        <dbReference type="Rhea" id="RHEA:76615"/>
        <dbReference type="ChEBI" id="CHEBI:15377"/>
        <dbReference type="ChEBI" id="CHEBI:15378"/>
        <dbReference type="ChEBI" id="CHEBI:17544"/>
        <dbReference type="ChEBI" id="CHEBI:33190"/>
        <dbReference type="ChEBI" id="CHEBI:57287"/>
        <dbReference type="ChEBI" id="CHEBI:57288"/>
        <dbReference type="ChEBI" id="CHEBI:57540"/>
        <dbReference type="ChEBI" id="CHEBI:57945"/>
        <dbReference type="EC" id="1.2.1.27"/>
    </reaction>
    <physiologicalReaction direction="left-to-right" evidence="6">
        <dbReference type="Rhea" id="RHEA:76616"/>
    </physiologicalReaction>
</comment>
<comment type="induction">
    <text evidence="3">Is subject to regulation by the transcriptional activator BauR.</text>
</comment>
<comment type="disruption phenotype">
    <text evidence="3">Cells lacking this gene grow normally on glutamate, putrescine, cadaverine, and GABA, but growth on beta-alanine is completely abolished.</text>
</comment>
<comment type="similarity">
    <text evidence="5">Belongs to the aldehyde dehydrogenase family.</text>
</comment>
<keyword id="KW-0520">NAD</keyword>
<keyword id="KW-0560">Oxidoreductase</keyword>
<keyword id="KW-1185">Reference proteome</keyword>
<sequence length="497" mass="53323">MGTLHHLINGEMVADNGRSADVFNPSTGEAIHKVPLADGKTLQKAIDAARAAFPAWRNTPPAKRAQVLYRFKQLLEQNEARISKLISEEHGKTLEDAAGELKRGIENVEYACAAPEILKGEYSRNVGPNIDAWSDFQPIGVVAGITPFNFPAMVPLWMYPLAIACGNTFILKPSERDPSSTLLIAELFHEAGLPKGVLNVVHGDKEAVDGLLQAPEVKAISFVGSTPIAEYIYAEGTKRGKRVQALGGAKNHAVLMPDADLDNAVSALMGAAYGSCGERCMAISVAVCVGDQVADALIAKLVPQIKALKIGAGTSCGLDMGPLVTAAAQAKVTGYIDSGVAQGAELVVDGRGYQVAGHENGFFLGGSLFDRVTPEMTIYKEEIFGPVLCVVRVNSLEEAMQLINDHEYGNGTCIFTRDGEAARLFCDEIEVGMVGVNVPLPVPVAYHSFGGWKRSLFGDLHAYGPDGVRFYTRRKAITQRWPQRASHEASQFAFPSL</sequence>
<accession>Q9I702</accession>
<protein>
    <recommendedName>
        <fullName evidence="6">Malonate-semialdehyde dehydrogenase</fullName>
        <ecNumber evidence="6">1.2.1.27</ecNumber>
    </recommendedName>
    <alternativeName>
        <fullName evidence="4">3-oxopropanoate dehydrogenase</fullName>
    </alternativeName>
</protein>
<feature type="chain" id="PRO_0000428972" description="Malonate-semialdehyde dehydrogenase">
    <location>
        <begin position="1"/>
        <end position="497"/>
    </location>
</feature>
<feature type="active site" description="Nucleophile" evidence="2">
    <location>
        <position position="280"/>
    </location>
</feature>
<feature type="binding site" evidence="1">
    <location>
        <position position="148"/>
    </location>
    <ligand>
        <name>NAD(+)</name>
        <dbReference type="ChEBI" id="CHEBI:57540"/>
    </ligand>
</feature>
<feature type="binding site" evidence="1">
    <location>
        <position position="172"/>
    </location>
    <ligand>
        <name>NAD(+)</name>
        <dbReference type="ChEBI" id="CHEBI:57540"/>
    </ligand>
</feature>
<feature type="binding site" evidence="1">
    <location>
        <position position="175"/>
    </location>
    <ligand>
        <name>NAD(+)</name>
        <dbReference type="ChEBI" id="CHEBI:57540"/>
    </ligand>
</feature>
<feature type="binding site" evidence="1">
    <location>
        <position position="176"/>
    </location>
    <ligand>
        <name>NAD(+)</name>
        <dbReference type="ChEBI" id="CHEBI:57540"/>
    </ligand>
</feature>
<feature type="binding site" evidence="1">
    <location>
        <position position="225"/>
    </location>
    <ligand>
        <name>NAD(+)</name>
        <dbReference type="ChEBI" id="CHEBI:57540"/>
    </ligand>
</feature>
<feature type="binding site" evidence="1">
    <location>
        <position position="382"/>
    </location>
    <ligand>
        <name>NAD(+)</name>
        <dbReference type="ChEBI" id="CHEBI:57540"/>
    </ligand>
</feature>
<organism>
    <name type="scientific">Pseudomonas aeruginosa (strain ATCC 15692 / DSM 22644 / CIP 104116 / JCM 14847 / LMG 12228 / 1C / PRS 101 / PAO1)</name>
    <dbReference type="NCBI Taxonomy" id="208964"/>
    <lineage>
        <taxon>Bacteria</taxon>
        <taxon>Pseudomonadati</taxon>
        <taxon>Pseudomonadota</taxon>
        <taxon>Gammaproteobacteria</taxon>
        <taxon>Pseudomonadales</taxon>
        <taxon>Pseudomonadaceae</taxon>
        <taxon>Pseudomonas</taxon>
    </lineage>
</organism>
<proteinExistence type="evidence at transcript level"/>
<evidence type="ECO:0000250" key="1">
    <source>
        <dbReference type="UniProtKB" id="P42412"/>
    </source>
</evidence>
<evidence type="ECO:0000255" key="2">
    <source>
        <dbReference type="PROSITE-ProRule" id="PRU10008"/>
    </source>
</evidence>
<evidence type="ECO:0000269" key="3">
    <source>
    </source>
</evidence>
<evidence type="ECO:0000303" key="4">
    <source>
    </source>
</evidence>
<evidence type="ECO:0000305" key="5"/>
<evidence type="ECO:0000305" key="6">
    <source>
    </source>
</evidence>
<name>BAUC_PSEAE</name>
<dbReference type="EC" id="1.2.1.27" evidence="6"/>
<dbReference type="EMBL" id="AE004091">
    <property type="protein sequence ID" value="AAG03520.1"/>
    <property type="molecule type" value="Genomic_DNA"/>
</dbReference>
<dbReference type="PIR" id="D83628">
    <property type="entry name" value="D83628"/>
</dbReference>
<dbReference type="RefSeq" id="NP_248820.1">
    <property type="nucleotide sequence ID" value="NC_002516.2"/>
</dbReference>
<dbReference type="RefSeq" id="WP_003101230.1">
    <property type="nucleotide sequence ID" value="NZ_QZGE01000015.1"/>
</dbReference>
<dbReference type="SMR" id="Q9I702"/>
<dbReference type="STRING" id="208964.PA0130"/>
<dbReference type="PaxDb" id="208964-PA0130"/>
<dbReference type="GeneID" id="880875"/>
<dbReference type="KEGG" id="pae:PA0130"/>
<dbReference type="PATRIC" id="fig|208964.12.peg.135"/>
<dbReference type="PseudoCAP" id="PA0130"/>
<dbReference type="HOGENOM" id="CLU_005391_1_10_6"/>
<dbReference type="InParanoid" id="Q9I702"/>
<dbReference type="OrthoDB" id="9812625at2"/>
<dbReference type="PhylomeDB" id="Q9I702"/>
<dbReference type="BioCyc" id="PAER208964:G1FZ6-132-MONOMER"/>
<dbReference type="Proteomes" id="UP000002438">
    <property type="component" value="Chromosome"/>
</dbReference>
<dbReference type="GO" id="GO:0004491">
    <property type="term" value="F:methylmalonate-semialdehyde dehydrogenase (acylating, NAD) activity"/>
    <property type="evidence" value="ECO:0000318"/>
    <property type="project" value="GO_Central"/>
</dbReference>
<dbReference type="GO" id="GO:0019483">
    <property type="term" value="P:beta-alanine biosynthetic process"/>
    <property type="evidence" value="ECO:0000314"/>
    <property type="project" value="PseudoCAP"/>
</dbReference>
<dbReference type="GO" id="GO:0006210">
    <property type="term" value="P:thymine catabolic process"/>
    <property type="evidence" value="ECO:0000318"/>
    <property type="project" value="GO_Central"/>
</dbReference>
<dbReference type="GO" id="GO:0006574">
    <property type="term" value="P:valine catabolic process"/>
    <property type="evidence" value="ECO:0000318"/>
    <property type="project" value="GO_Central"/>
</dbReference>
<dbReference type="CDD" id="cd07085">
    <property type="entry name" value="ALDH_F6_MMSDH"/>
    <property type="match status" value="1"/>
</dbReference>
<dbReference type="FunFam" id="3.40.309.10:FF:000002">
    <property type="entry name" value="Methylmalonate-semialdehyde dehydrogenase (Acylating)"/>
    <property type="match status" value="1"/>
</dbReference>
<dbReference type="FunFam" id="3.40.605.10:FF:000003">
    <property type="entry name" value="Methylmalonate-semialdehyde dehydrogenase [acylating]"/>
    <property type="match status" value="1"/>
</dbReference>
<dbReference type="Gene3D" id="3.40.605.10">
    <property type="entry name" value="Aldehyde Dehydrogenase, Chain A, domain 1"/>
    <property type="match status" value="1"/>
</dbReference>
<dbReference type="Gene3D" id="3.40.309.10">
    <property type="entry name" value="Aldehyde Dehydrogenase, Chain A, domain 2"/>
    <property type="match status" value="1"/>
</dbReference>
<dbReference type="InterPro" id="IPR016161">
    <property type="entry name" value="Ald_DH/histidinol_DH"/>
</dbReference>
<dbReference type="InterPro" id="IPR016163">
    <property type="entry name" value="Ald_DH_C"/>
</dbReference>
<dbReference type="InterPro" id="IPR016160">
    <property type="entry name" value="Ald_DH_CS_CYS"/>
</dbReference>
<dbReference type="InterPro" id="IPR016162">
    <property type="entry name" value="Ald_DH_N"/>
</dbReference>
<dbReference type="InterPro" id="IPR015590">
    <property type="entry name" value="Aldehyde_DH_dom"/>
</dbReference>
<dbReference type="InterPro" id="IPR010061">
    <property type="entry name" value="MeMal-semiAld_DH"/>
</dbReference>
<dbReference type="NCBIfam" id="TIGR01722">
    <property type="entry name" value="MMSDH"/>
    <property type="match status" value="1"/>
</dbReference>
<dbReference type="PANTHER" id="PTHR43866">
    <property type="entry name" value="MALONATE-SEMIALDEHYDE DEHYDROGENASE"/>
    <property type="match status" value="1"/>
</dbReference>
<dbReference type="PANTHER" id="PTHR43866:SF4">
    <property type="entry name" value="MALONATE-SEMIALDEHYDE DEHYDROGENASE"/>
    <property type="match status" value="1"/>
</dbReference>
<dbReference type="Pfam" id="PF00171">
    <property type="entry name" value="Aldedh"/>
    <property type="match status" value="1"/>
</dbReference>
<dbReference type="SUPFAM" id="SSF53720">
    <property type="entry name" value="ALDH-like"/>
    <property type="match status" value="1"/>
</dbReference>
<dbReference type="PROSITE" id="PS00070">
    <property type="entry name" value="ALDEHYDE_DEHYDR_CYS"/>
    <property type="match status" value="1"/>
</dbReference>